<keyword id="KW-0413">Isomerase</keyword>
<keyword id="KW-1185">Reference proteome</keyword>
<protein>
    <recommendedName>
        <fullName evidence="1">Uronate isomerase</fullName>
        <ecNumber evidence="1">5.3.1.12</ecNumber>
    </recommendedName>
    <alternativeName>
        <fullName evidence="1">Glucuronate isomerase</fullName>
    </alternativeName>
    <alternativeName>
        <fullName evidence="1">Uronic isomerase</fullName>
    </alternativeName>
</protein>
<dbReference type="EC" id="5.3.1.12" evidence="1"/>
<dbReference type="EMBL" id="AF331922">
    <property type="protein sequence ID" value="AAK01134.1"/>
    <property type="molecule type" value="Genomic_DNA"/>
</dbReference>
<dbReference type="EMBL" id="AE013598">
    <property type="protein sequence ID" value="AAW77681.1"/>
    <property type="status" value="ALT_INIT"/>
    <property type="molecule type" value="Genomic_DNA"/>
</dbReference>
<dbReference type="SMR" id="Q9AM27"/>
<dbReference type="STRING" id="291331.XOO4427"/>
<dbReference type="KEGG" id="xoo:XOO4427"/>
<dbReference type="PATRIC" id="fig|291331.8.peg.4917"/>
<dbReference type="HOGENOM" id="CLU_044465_0_0_6"/>
<dbReference type="UniPathway" id="UPA00246"/>
<dbReference type="Proteomes" id="UP000006735">
    <property type="component" value="Chromosome"/>
</dbReference>
<dbReference type="GO" id="GO:0008880">
    <property type="term" value="F:glucuronate isomerase activity"/>
    <property type="evidence" value="ECO:0007669"/>
    <property type="project" value="UniProtKB-UniRule"/>
</dbReference>
<dbReference type="GO" id="GO:0019698">
    <property type="term" value="P:D-galacturonate catabolic process"/>
    <property type="evidence" value="ECO:0007669"/>
    <property type="project" value="TreeGrafter"/>
</dbReference>
<dbReference type="GO" id="GO:0042840">
    <property type="term" value="P:D-glucuronate catabolic process"/>
    <property type="evidence" value="ECO:0007669"/>
    <property type="project" value="TreeGrafter"/>
</dbReference>
<dbReference type="Gene3D" id="3.20.20.140">
    <property type="entry name" value="Metal-dependent hydrolases"/>
    <property type="match status" value="1"/>
</dbReference>
<dbReference type="Gene3D" id="1.10.2020.10">
    <property type="entry name" value="uronate isomerase, domain 2, chain A"/>
    <property type="match status" value="1"/>
</dbReference>
<dbReference type="HAMAP" id="MF_00675">
    <property type="entry name" value="UxaC"/>
    <property type="match status" value="1"/>
</dbReference>
<dbReference type="InterPro" id="IPR032466">
    <property type="entry name" value="Metal_Hydrolase"/>
</dbReference>
<dbReference type="InterPro" id="IPR003766">
    <property type="entry name" value="Uronate_isomerase"/>
</dbReference>
<dbReference type="NCBIfam" id="NF002794">
    <property type="entry name" value="PRK02925.1"/>
    <property type="match status" value="1"/>
</dbReference>
<dbReference type="PANTHER" id="PTHR30068">
    <property type="entry name" value="URONATE ISOMERASE"/>
    <property type="match status" value="1"/>
</dbReference>
<dbReference type="PANTHER" id="PTHR30068:SF4">
    <property type="entry name" value="URONATE ISOMERASE"/>
    <property type="match status" value="1"/>
</dbReference>
<dbReference type="Pfam" id="PF02614">
    <property type="entry name" value="UxaC"/>
    <property type="match status" value="1"/>
</dbReference>
<dbReference type="SUPFAM" id="SSF51556">
    <property type="entry name" value="Metallo-dependent hydrolases"/>
    <property type="match status" value="1"/>
</dbReference>
<gene>
    <name evidence="1" type="primary">uxaC</name>
    <name type="synonym">hrmI</name>
    <name type="ordered locus">XOO4427</name>
</gene>
<proteinExistence type="inferred from homology"/>
<organism>
    <name type="scientific">Xanthomonas oryzae pv. oryzae (strain KACC10331 / KXO85)</name>
    <dbReference type="NCBI Taxonomy" id="291331"/>
    <lineage>
        <taxon>Bacteria</taxon>
        <taxon>Pseudomonadati</taxon>
        <taxon>Pseudomonadota</taxon>
        <taxon>Gammaproteobacteria</taxon>
        <taxon>Lysobacterales</taxon>
        <taxon>Lysobacteraceae</taxon>
        <taxon>Xanthomonas</taxon>
    </lineage>
</organism>
<reference key="1">
    <citation type="submission" date="2000-12" db="EMBL/GenBank/DDBJ databases">
        <title>Xylanase gene from Xanthomonas oryzae pv. oryzae.</title>
        <authorList>
            <person name="Rajeshwari R."/>
            <person name="Sonti R.V."/>
        </authorList>
    </citation>
    <scope>NUCLEOTIDE SEQUENCE [GENOMIC DNA]</scope>
</reference>
<reference key="2">
    <citation type="journal article" date="2005" name="Nucleic Acids Res.">
        <title>The genome sequence of Xanthomonas oryzae pathovar oryzae KACC10331, the bacterial blight pathogen of rice.</title>
        <authorList>
            <person name="Lee B.-M."/>
            <person name="Park Y.-J."/>
            <person name="Park D.-S."/>
            <person name="Kang H.-W."/>
            <person name="Kim J.-G."/>
            <person name="Song E.-S."/>
            <person name="Park I.-C."/>
            <person name="Yoon U.-H."/>
            <person name="Hahn J.-H."/>
            <person name="Koo B.-S."/>
            <person name="Lee G.-B."/>
            <person name="Kim H."/>
            <person name="Park H.-S."/>
            <person name="Yoon K.-O."/>
            <person name="Kim J.-H."/>
            <person name="Jung C.-H."/>
            <person name="Koh N.-H."/>
            <person name="Seo J.-S."/>
            <person name="Go S.-J."/>
        </authorList>
    </citation>
    <scope>NUCLEOTIDE SEQUENCE [LARGE SCALE GENOMIC DNA]</scope>
    <source>
        <strain>KACC10331 / KXO85</strain>
    </source>
</reference>
<accession>Q9AM27</accession>
<accession>Q5GUE2</accession>
<name>UXAC_XANOR</name>
<comment type="catalytic activity">
    <reaction evidence="1">
        <text>D-glucuronate = D-fructuronate</text>
        <dbReference type="Rhea" id="RHEA:13049"/>
        <dbReference type="ChEBI" id="CHEBI:58720"/>
        <dbReference type="ChEBI" id="CHEBI:59863"/>
        <dbReference type="EC" id="5.3.1.12"/>
    </reaction>
</comment>
<comment type="catalytic activity">
    <reaction evidence="1">
        <text>aldehydo-D-galacturonate = keto-D-tagaturonate</text>
        <dbReference type="Rhea" id="RHEA:27702"/>
        <dbReference type="ChEBI" id="CHEBI:12952"/>
        <dbReference type="ChEBI" id="CHEBI:17886"/>
        <dbReference type="EC" id="5.3.1.12"/>
    </reaction>
</comment>
<comment type="pathway">
    <text evidence="1">Carbohydrate metabolism; pentose and glucuronate interconversion.</text>
</comment>
<comment type="similarity">
    <text evidence="1">Belongs to the metallo-dependent hydrolases superfamily. Uronate isomerase family.</text>
</comment>
<comment type="sequence caution" evidence="2">
    <conflict type="erroneous initiation">
        <sequence resource="EMBL-CDS" id="AAW77681"/>
    </conflict>
</comment>
<sequence length="472" mass="52729">MRSSVLSLHPDRLLPADPGTRAIAGRLYAQIATLPIISPHGHTDPAWFATNAPFADATELLLVPDHYVFRMLYSQGIDLDAIGIPRADGMRAAVDPRAAWRVFAAHYTVLRGTPSALWLNHVFHDVFDLRLRLDAGTADHYYDHITAALQTPDFLPRALFERFNIEVIATTESPLDPLHHHAAIAASGWQGRVVTAYRPDPVVDPEHAQFAGALQQFGALTGEDVLTWNGYLRAHRQRRAFFAAHGATSTDHGHPSAATADLSPAQAQRLFDTVVRGAATPEQAELFRAQVLTEMAAMSLDDGLVMQLHPGCFRNHNRPLFERYGRDKGADIPMRTDYVHALKPLLDRYGNDPRLRLIVFTLDETSYSRELAPLAGHYPSLLLGPAWWFHDAPEGMWRFREQTLASAGFYNTVGFNDDTRAFLSIPARHDVARRVDSAFLAKLVAEHRLEEDEATEVAIDLAYRMPKRAYNL</sequence>
<evidence type="ECO:0000255" key="1">
    <source>
        <dbReference type="HAMAP-Rule" id="MF_00675"/>
    </source>
</evidence>
<evidence type="ECO:0000305" key="2"/>
<feature type="chain" id="PRO_0000172796" description="Uronate isomerase">
    <location>
        <begin position="1"/>
        <end position="472"/>
    </location>
</feature>
<feature type="sequence conflict" description="In Ref. 1; AAK01134." evidence="2" ref="1">
    <original>A</original>
    <variation>E</variation>
    <location>
        <position position="208"/>
    </location>
</feature>
<feature type="sequence conflict" description="In Ref. 1; AAK01134." evidence="2" ref="1">
    <original>P</original>
    <variation>R</variation>
    <location>
        <position position="353"/>
    </location>
</feature>
<feature type="sequence conflict" description="In Ref. 1; AAK01134." evidence="2" ref="1">
    <original>V</original>
    <variation>L</variation>
    <location>
        <position position="457"/>
    </location>
</feature>
<feature type="sequence conflict" description="In Ref. 1; AAK01134." evidence="2" ref="1">
    <original>L</original>
    <variation>M</variation>
    <location>
        <position position="461"/>
    </location>
</feature>